<accession>A0B880</accession>
<organism>
    <name type="scientific">Methanothrix thermoacetophila (strain DSM 6194 / JCM 14653 / NBRC 101360 / PT)</name>
    <name type="common">Methanosaeta thermophila</name>
    <dbReference type="NCBI Taxonomy" id="349307"/>
    <lineage>
        <taxon>Archaea</taxon>
        <taxon>Methanobacteriati</taxon>
        <taxon>Methanobacteriota</taxon>
        <taxon>Stenosarchaea group</taxon>
        <taxon>Methanomicrobia</taxon>
        <taxon>Methanotrichales</taxon>
        <taxon>Methanotrichaceae</taxon>
        <taxon>Methanothrix</taxon>
    </lineage>
</organism>
<reference key="1">
    <citation type="submission" date="2006-10" db="EMBL/GenBank/DDBJ databases">
        <title>Complete sequence of Methanosaeta thermophila PT.</title>
        <authorList>
            <consortium name="US DOE Joint Genome Institute"/>
            <person name="Copeland A."/>
            <person name="Lucas S."/>
            <person name="Lapidus A."/>
            <person name="Barry K."/>
            <person name="Detter J.C."/>
            <person name="Glavina del Rio T."/>
            <person name="Hammon N."/>
            <person name="Israni S."/>
            <person name="Pitluck S."/>
            <person name="Chain P."/>
            <person name="Malfatti S."/>
            <person name="Shin M."/>
            <person name="Vergez L."/>
            <person name="Schmutz J."/>
            <person name="Larimer F."/>
            <person name="Land M."/>
            <person name="Hauser L."/>
            <person name="Kyrpides N."/>
            <person name="Kim E."/>
            <person name="Smith K.S."/>
            <person name="Ingram-Smith C."/>
            <person name="Richardson P."/>
        </authorList>
    </citation>
    <scope>NUCLEOTIDE SEQUENCE [LARGE SCALE GENOMIC DNA]</scope>
    <source>
        <strain>DSM 6194 / JCM 14653 / NBRC 101360 / PT</strain>
    </source>
</reference>
<protein>
    <recommendedName>
        <fullName evidence="1">Thiamine thiazole synthase</fullName>
        <ecNumber evidence="1">2.4.2.59</ecNumber>
    </recommendedName>
</protein>
<evidence type="ECO:0000255" key="1">
    <source>
        <dbReference type="HAMAP-Rule" id="MF_00304"/>
    </source>
</evidence>
<evidence type="ECO:0000305" key="2"/>
<sequence length="262" mass="27766">MALDEVKITRAIVESYLESFLKCTDVDVALVGAGPANLVAAKRLAEADVRVVLFEKRLSVGGGLWGGGMMFPRIVVQKEACRILDEYDIWYREFEEGYYVADSIEVVAKLTAGAIDAGAELINLVSVEDVMIREGDRIVGLVINWTAADMAGIHVDPLAIRARVVIDGTGHDAAVCRVVQKKIPGAIVGESGVIGEKPMWAALGEKIVVDATREVYPGLIVAGMAATTVAAGPRMGPIFGGMLLSGEKAASIALEKLAQSVD</sequence>
<proteinExistence type="inferred from homology"/>
<keyword id="KW-0408">Iron</keyword>
<keyword id="KW-0479">Metal-binding</keyword>
<keyword id="KW-0520">NAD</keyword>
<keyword id="KW-1185">Reference proteome</keyword>
<keyword id="KW-0784">Thiamine biosynthesis</keyword>
<keyword id="KW-0808">Transferase</keyword>
<comment type="function">
    <text evidence="1">Involved in the biosynthesis of the thiazole moiety of thiamine. Catalyzes the conversion of NAD and glycine to adenosine diphosphate 5-(2-hydroxyethyl)-4-methylthiazole-2-carboxylate (ADT), an adenylated thiazole intermediate, using free sulfide as a source of sulfur.</text>
</comment>
<comment type="catalytic activity">
    <reaction evidence="1">
        <text>hydrogen sulfide + glycine + NAD(+) = ADP-5-ethyl-4-methylthiazole-2-carboxylate + nicotinamide + 3 H2O + H(+)</text>
        <dbReference type="Rhea" id="RHEA:55704"/>
        <dbReference type="ChEBI" id="CHEBI:15377"/>
        <dbReference type="ChEBI" id="CHEBI:15378"/>
        <dbReference type="ChEBI" id="CHEBI:17154"/>
        <dbReference type="ChEBI" id="CHEBI:29919"/>
        <dbReference type="ChEBI" id="CHEBI:57305"/>
        <dbReference type="ChEBI" id="CHEBI:57540"/>
        <dbReference type="ChEBI" id="CHEBI:139151"/>
        <dbReference type="EC" id="2.4.2.59"/>
    </reaction>
</comment>
<comment type="cofactor">
    <cofactor evidence="1">
        <name>Fe(2+)</name>
        <dbReference type="ChEBI" id="CHEBI:29033"/>
    </cofactor>
</comment>
<comment type="pathway">
    <text evidence="1">Cofactor biosynthesis; thiamine diphosphate biosynthesis.</text>
</comment>
<comment type="subunit">
    <text evidence="1">Homooctamer; tetramer of dimers.</text>
</comment>
<comment type="similarity">
    <text evidence="1">Belongs to the THI4 family.</text>
</comment>
<comment type="sequence caution" evidence="2">
    <conflict type="erroneous initiation">
        <sequence resource="EMBL-CDS" id="ABK14904"/>
    </conflict>
</comment>
<dbReference type="EC" id="2.4.2.59" evidence="1"/>
<dbReference type="EMBL" id="CP000477">
    <property type="protein sequence ID" value="ABK14904.1"/>
    <property type="status" value="ALT_INIT"/>
    <property type="molecule type" value="Genomic_DNA"/>
</dbReference>
<dbReference type="RefSeq" id="WP_175265854.1">
    <property type="nucleotide sequence ID" value="NC_008553.1"/>
</dbReference>
<dbReference type="SMR" id="A0B880"/>
<dbReference type="STRING" id="349307.Mthe_1121"/>
<dbReference type="GeneID" id="4463396"/>
<dbReference type="KEGG" id="mtp:Mthe_1121"/>
<dbReference type="HOGENOM" id="CLU_053727_2_0_2"/>
<dbReference type="OrthoDB" id="4240at2157"/>
<dbReference type="UniPathway" id="UPA00060"/>
<dbReference type="Proteomes" id="UP000000674">
    <property type="component" value="Chromosome"/>
</dbReference>
<dbReference type="GO" id="GO:0005506">
    <property type="term" value="F:iron ion binding"/>
    <property type="evidence" value="ECO:0007669"/>
    <property type="project" value="UniProtKB-UniRule"/>
</dbReference>
<dbReference type="GO" id="GO:0016763">
    <property type="term" value="F:pentosyltransferase activity"/>
    <property type="evidence" value="ECO:0007669"/>
    <property type="project" value="UniProtKB-UniRule"/>
</dbReference>
<dbReference type="GO" id="GO:0009228">
    <property type="term" value="P:thiamine biosynthetic process"/>
    <property type="evidence" value="ECO:0007669"/>
    <property type="project" value="UniProtKB-KW"/>
</dbReference>
<dbReference type="GO" id="GO:0009229">
    <property type="term" value="P:thiamine diphosphate biosynthetic process"/>
    <property type="evidence" value="ECO:0007669"/>
    <property type="project" value="UniProtKB-UniRule"/>
</dbReference>
<dbReference type="GO" id="GO:0052837">
    <property type="term" value="P:thiazole biosynthetic process"/>
    <property type="evidence" value="ECO:0007669"/>
    <property type="project" value="UniProtKB-UniRule"/>
</dbReference>
<dbReference type="Gene3D" id="3.50.50.60">
    <property type="entry name" value="FAD/NAD(P)-binding domain"/>
    <property type="match status" value="1"/>
</dbReference>
<dbReference type="HAMAP" id="MF_00304">
    <property type="entry name" value="Thi4"/>
    <property type="match status" value="1"/>
</dbReference>
<dbReference type="InterPro" id="IPR036188">
    <property type="entry name" value="FAD/NAD-bd_sf"/>
</dbReference>
<dbReference type="InterPro" id="IPR002922">
    <property type="entry name" value="Thi4_fam"/>
</dbReference>
<dbReference type="InterPro" id="IPR022828">
    <property type="entry name" value="Thi4_prok"/>
</dbReference>
<dbReference type="NCBIfam" id="TIGR00292">
    <property type="entry name" value="sulfide-dependent adenosine diphosphate thiazole synthase"/>
    <property type="match status" value="1"/>
</dbReference>
<dbReference type="PANTHER" id="PTHR43422">
    <property type="entry name" value="THIAMINE THIAZOLE SYNTHASE"/>
    <property type="match status" value="1"/>
</dbReference>
<dbReference type="PANTHER" id="PTHR43422:SF3">
    <property type="entry name" value="THIAMINE THIAZOLE SYNTHASE"/>
    <property type="match status" value="1"/>
</dbReference>
<dbReference type="Pfam" id="PF01946">
    <property type="entry name" value="Thi4"/>
    <property type="match status" value="1"/>
</dbReference>
<dbReference type="PRINTS" id="PR00419">
    <property type="entry name" value="ADXRDTASE"/>
</dbReference>
<dbReference type="SUPFAM" id="SSF51905">
    <property type="entry name" value="FAD/NAD(P)-binding domain"/>
    <property type="match status" value="1"/>
</dbReference>
<feature type="chain" id="PRO_0000302884" description="Thiamine thiazole synthase">
    <location>
        <begin position="1"/>
        <end position="262"/>
    </location>
</feature>
<feature type="binding site" description="in other chain" evidence="1">
    <location>
        <position position="36"/>
    </location>
    <ligand>
        <name>NAD(+)</name>
        <dbReference type="ChEBI" id="CHEBI:57540"/>
        <note>ligand shared between two adjacent protomers</note>
    </ligand>
</feature>
<feature type="binding site" description="in other chain" evidence="1">
    <location>
        <begin position="55"/>
        <end position="56"/>
    </location>
    <ligand>
        <name>NAD(+)</name>
        <dbReference type="ChEBI" id="CHEBI:57540"/>
        <note>ligand shared between two adjacent protomers</note>
    </ligand>
</feature>
<feature type="binding site" description="in other chain" evidence="1">
    <location>
        <position position="63"/>
    </location>
    <ligand>
        <name>NAD(+)</name>
        <dbReference type="ChEBI" id="CHEBI:57540"/>
        <note>ligand shared between two adjacent protomers</note>
    </ligand>
</feature>
<feature type="binding site" description="in other chain" evidence="1">
    <location>
        <position position="127"/>
    </location>
    <ligand>
        <name>NAD(+)</name>
        <dbReference type="ChEBI" id="CHEBI:57540"/>
        <note>ligand shared between two adjacent protomers</note>
    </ligand>
</feature>
<feature type="binding site" evidence="1">
    <location>
        <begin position="154"/>
        <end position="156"/>
    </location>
    <ligand>
        <name>NAD(+)</name>
        <dbReference type="ChEBI" id="CHEBI:57540"/>
        <note>ligand shared between two adjacent protomers</note>
    </ligand>
</feature>
<feature type="binding site" evidence="1">
    <location>
        <position position="156"/>
    </location>
    <ligand>
        <name>Fe cation</name>
        <dbReference type="ChEBI" id="CHEBI:24875"/>
        <note>ligand shared between two adjacent protomers</note>
    </ligand>
</feature>
<feature type="binding site" description="in other chain" evidence="1">
    <location>
        <position position="171"/>
    </location>
    <ligand>
        <name>Fe cation</name>
        <dbReference type="ChEBI" id="CHEBI:24875"/>
        <note>ligand shared between two adjacent protomers</note>
    </ligand>
</feature>
<feature type="binding site" description="in other chain" evidence="1">
    <location>
        <position position="224"/>
    </location>
    <ligand>
        <name>NAD(+)</name>
        <dbReference type="ChEBI" id="CHEBI:57540"/>
        <note>ligand shared between two adjacent protomers</note>
    </ligand>
</feature>
<feature type="binding site" evidence="1">
    <location>
        <position position="234"/>
    </location>
    <ligand>
        <name>glycine</name>
        <dbReference type="ChEBI" id="CHEBI:57305"/>
    </ligand>
</feature>
<name>THI4_METTP</name>
<gene>
    <name evidence="1" type="primary">thi4</name>
    <name type="ordered locus">Mthe_1121</name>
</gene>